<comment type="function">
    <text evidence="1">Mediates zinc uptake. May also transport other divalent cations.</text>
</comment>
<comment type="catalytic activity">
    <reaction evidence="1">
        <text>Zn(2+)(in) = Zn(2+)(out)</text>
        <dbReference type="Rhea" id="RHEA:29351"/>
        <dbReference type="ChEBI" id="CHEBI:29105"/>
    </reaction>
</comment>
<comment type="subcellular location">
    <subcellularLocation>
        <location evidence="1">Cell inner membrane</location>
        <topology evidence="1 2">Multi-pass membrane protein</topology>
    </subcellularLocation>
</comment>
<comment type="similarity">
    <text evidence="1 2">Belongs to the ZIP transporter (TC 2.A.5) family. ZupT subfamily.</text>
</comment>
<proteinExistence type="inferred from homology"/>
<sequence>MSVPLILTILAGAATFIGAFLGVLGQKPSNRLLAFSLGFAAGIMLLISLMEMLPAALAAEGMSPVLGYGMFIFGLLGYFGLDRMLPHAHPQDLMQKSVQPLPKSIKRTAILLTLGISLHNFPEGIATFVTASSNLELGFGIALAVALHNIPEGLAVAGPVYAATGSKRTAILWAGISGLAEILGGVLAWLILGSMISPVVMAAIMAAVAGIMVALSVDELMPLAKEIDPNNNPSYGVLCGMSVMGFSLVLLQTAGIG</sequence>
<evidence type="ECO:0000255" key="1">
    <source>
        <dbReference type="HAMAP-Rule" id="MF_00548"/>
    </source>
</evidence>
<evidence type="ECO:0000305" key="2"/>
<feature type="chain" id="PRO_0000207272" description="Zinc transporter ZupT">
    <location>
        <begin position="1"/>
        <end position="257"/>
    </location>
</feature>
<feature type="transmembrane region" description="Helical" evidence="1">
    <location>
        <begin position="5"/>
        <end position="25"/>
    </location>
</feature>
<feature type="transmembrane region" description="Helical" evidence="1">
    <location>
        <begin position="32"/>
        <end position="52"/>
    </location>
</feature>
<feature type="transmembrane region" description="Helical" evidence="1">
    <location>
        <begin position="61"/>
        <end position="81"/>
    </location>
</feature>
<feature type="transmembrane region" description="Helical" evidence="1">
    <location>
        <begin position="137"/>
        <end position="157"/>
    </location>
</feature>
<feature type="transmembrane region" description="Helical" evidence="1">
    <location>
        <begin position="171"/>
        <end position="191"/>
    </location>
</feature>
<feature type="transmembrane region" description="Helical" evidence="1">
    <location>
        <begin position="195"/>
        <end position="215"/>
    </location>
</feature>
<feature type="transmembrane region" description="Helical" evidence="1">
    <location>
        <begin position="236"/>
        <end position="256"/>
    </location>
</feature>
<feature type="binding site" description="M2 metal binding site" evidence="1">
    <location>
        <position position="120"/>
    </location>
    <ligand>
        <name>Fe(2+)</name>
        <dbReference type="ChEBI" id="CHEBI:29033"/>
    </ligand>
</feature>
<feature type="binding site" description="M2 metal binding site" evidence="1">
    <location>
        <position position="123"/>
    </location>
    <ligand>
        <name>Fe(2+)</name>
        <dbReference type="ChEBI" id="CHEBI:29033"/>
    </ligand>
</feature>
<feature type="binding site" description="M1 metal binding site" evidence="1">
    <location>
        <position position="123"/>
    </location>
    <ligand>
        <name>Zn(2+)</name>
        <dbReference type="ChEBI" id="CHEBI:29105"/>
    </ligand>
</feature>
<feature type="binding site" description="M1 metal binding site" evidence="1">
    <location>
        <position position="148"/>
    </location>
    <ligand>
        <name>Zn(2+)</name>
        <dbReference type="ChEBI" id="CHEBI:29105"/>
    </ligand>
</feature>
<feature type="binding site" description="M2 metal binding site" evidence="1">
    <location>
        <position position="149"/>
    </location>
    <ligand>
        <name>Fe(2+)</name>
        <dbReference type="ChEBI" id="CHEBI:29033"/>
    </ligand>
</feature>
<feature type="binding site" description="M2 metal binding site" evidence="1">
    <location>
        <position position="152"/>
    </location>
    <ligand>
        <name>Fe(2+)</name>
        <dbReference type="ChEBI" id="CHEBI:29033"/>
    </ligand>
</feature>
<feature type="binding site" description="M1 metal binding site" evidence="1">
    <location>
        <position position="152"/>
    </location>
    <ligand>
        <name>Zn(2+)</name>
        <dbReference type="ChEBI" id="CHEBI:29105"/>
    </ligand>
</feature>
<feature type="binding site" description="M2 metal binding site" evidence="1">
    <location>
        <position position="181"/>
    </location>
    <ligand>
        <name>Fe(2+)</name>
        <dbReference type="ChEBI" id="CHEBI:29033"/>
    </ligand>
</feature>
<protein>
    <recommendedName>
        <fullName evidence="1">Zinc transporter ZupT</fullName>
    </recommendedName>
</protein>
<organism>
    <name type="scientific">Escherichia coli O157:H7</name>
    <dbReference type="NCBI Taxonomy" id="83334"/>
    <lineage>
        <taxon>Bacteria</taxon>
        <taxon>Pseudomonadati</taxon>
        <taxon>Pseudomonadota</taxon>
        <taxon>Gammaproteobacteria</taxon>
        <taxon>Enterobacterales</taxon>
        <taxon>Enterobacteriaceae</taxon>
        <taxon>Escherichia</taxon>
    </lineage>
</organism>
<dbReference type="EMBL" id="AE005174">
    <property type="protein sequence ID" value="AAG58179.1"/>
    <property type="molecule type" value="Genomic_DNA"/>
</dbReference>
<dbReference type="EMBL" id="BA000007">
    <property type="protein sequence ID" value="BAB37351.1"/>
    <property type="molecule type" value="Genomic_DNA"/>
</dbReference>
<dbReference type="PIR" id="G85964">
    <property type="entry name" value="G85964"/>
</dbReference>
<dbReference type="PIR" id="H91119">
    <property type="entry name" value="H91119"/>
</dbReference>
<dbReference type="RefSeq" id="NP_311955.1">
    <property type="nucleotide sequence ID" value="NC_002695.1"/>
</dbReference>
<dbReference type="RefSeq" id="WP_001295627.1">
    <property type="nucleotide sequence ID" value="NZ_VOAI01000009.1"/>
</dbReference>
<dbReference type="SMR" id="P0A8H5"/>
<dbReference type="STRING" id="155864.Z4397"/>
<dbReference type="GeneID" id="916247"/>
<dbReference type="GeneID" id="93778954"/>
<dbReference type="KEGG" id="ece:Z4397"/>
<dbReference type="KEGG" id="ecs:ECs_3928"/>
<dbReference type="PATRIC" id="fig|386585.9.peg.4096"/>
<dbReference type="eggNOG" id="COG0428">
    <property type="taxonomic scope" value="Bacteria"/>
</dbReference>
<dbReference type="HOGENOM" id="CLU_015114_1_3_6"/>
<dbReference type="OMA" id="HESTGPC"/>
<dbReference type="Proteomes" id="UP000000558">
    <property type="component" value="Chromosome"/>
</dbReference>
<dbReference type="Proteomes" id="UP000002519">
    <property type="component" value="Chromosome"/>
</dbReference>
<dbReference type="GO" id="GO:0005886">
    <property type="term" value="C:plasma membrane"/>
    <property type="evidence" value="ECO:0007669"/>
    <property type="project" value="UniProtKB-SubCell"/>
</dbReference>
<dbReference type="GO" id="GO:0046872">
    <property type="term" value="F:metal ion binding"/>
    <property type="evidence" value="ECO:0007669"/>
    <property type="project" value="UniProtKB-KW"/>
</dbReference>
<dbReference type="GO" id="GO:0005385">
    <property type="term" value="F:zinc ion transmembrane transporter activity"/>
    <property type="evidence" value="ECO:0007669"/>
    <property type="project" value="UniProtKB-UniRule"/>
</dbReference>
<dbReference type="HAMAP" id="MF_00548">
    <property type="entry name" value="ZupT"/>
    <property type="match status" value="1"/>
</dbReference>
<dbReference type="InterPro" id="IPR003689">
    <property type="entry name" value="ZIP"/>
</dbReference>
<dbReference type="InterPro" id="IPR023498">
    <property type="entry name" value="Zn_transptr_ZupT"/>
</dbReference>
<dbReference type="NCBIfam" id="NF003243">
    <property type="entry name" value="PRK04201.1"/>
    <property type="match status" value="1"/>
</dbReference>
<dbReference type="PANTHER" id="PTHR11040:SF205">
    <property type="entry name" value="ZINC TRANSPORTER ZUPT"/>
    <property type="match status" value="1"/>
</dbReference>
<dbReference type="PANTHER" id="PTHR11040">
    <property type="entry name" value="ZINC/IRON TRANSPORTER"/>
    <property type="match status" value="1"/>
</dbReference>
<dbReference type="Pfam" id="PF02535">
    <property type="entry name" value="Zip"/>
    <property type="match status" value="2"/>
</dbReference>
<name>ZUPT_ECO57</name>
<gene>
    <name evidence="1" type="primary">zupT</name>
    <name type="ordered locus">Z4397</name>
    <name type="ordered locus">ECs3928</name>
</gene>
<accession>P0A8H5</accession>
<accession>P24198</accession>
<keyword id="KW-0997">Cell inner membrane</keyword>
<keyword id="KW-1003">Cell membrane</keyword>
<keyword id="KW-0406">Ion transport</keyword>
<keyword id="KW-0408">Iron</keyword>
<keyword id="KW-0472">Membrane</keyword>
<keyword id="KW-0479">Metal-binding</keyword>
<keyword id="KW-1185">Reference proteome</keyword>
<keyword id="KW-0812">Transmembrane</keyword>
<keyword id="KW-1133">Transmembrane helix</keyword>
<keyword id="KW-0813">Transport</keyword>
<keyword id="KW-0862">Zinc</keyword>
<keyword id="KW-0864">Zinc transport</keyword>
<reference key="1">
    <citation type="journal article" date="2001" name="Nature">
        <title>Genome sequence of enterohaemorrhagic Escherichia coli O157:H7.</title>
        <authorList>
            <person name="Perna N.T."/>
            <person name="Plunkett G. III"/>
            <person name="Burland V."/>
            <person name="Mau B."/>
            <person name="Glasner J.D."/>
            <person name="Rose D.J."/>
            <person name="Mayhew G.F."/>
            <person name="Evans P.S."/>
            <person name="Gregor J."/>
            <person name="Kirkpatrick H.A."/>
            <person name="Posfai G."/>
            <person name="Hackett J."/>
            <person name="Klink S."/>
            <person name="Boutin A."/>
            <person name="Shao Y."/>
            <person name="Miller L."/>
            <person name="Grotbeck E.J."/>
            <person name="Davis N.W."/>
            <person name="Lim A."/>
            <person name="Dimalanta E.T."/>
            <person name="Potamousis K."/>
            <person name="Apodaca J."/>
            <person name="Anantharaman T.S."/>
            <person name="Lin J."/>
            <person name="Yen G."/>
            <person name="Schwartz D.C."/>
            <person name="Welch R.A."/>
            <person name="Blattner F.R."/>
        </authorList>
    </citation>
    <scope>NUCLEOTIDE SEQUENCE [LARGE SCALE GENOMIC DNA]</scope>
    <source>
        <strain>O157:H7 / EDL933 / ATCC 700927 / EHEC</strain>
    </source>
</reference>
<reference key="2">
    <citation type="journal article" date="2001" name="DNA Res.">
        <title>Complete genome sequence of enterohemorrhagic Escherichia coli O157:H7 and genomic comparison with a laboratory strain K-12.</title>
        <authorList>
            <person name="Hayashi T."/>
            <person name="Makino K."/>
            <person name="Ohnishi M."/>
            <person name="Kurokawa K."/>
            <person name="Ishii K."/>
            <person name="Yokoyama K."/>
            <person name="Han C.-G."/>
            <person name="Ohtsubo E."/>
            <person name="Nakayama K."/>
            <person name="Murata T."/>
            <person name="Tanaka M."/>
            <person name="Tobe T."/>
            <person name="Iida T."/>
            <person name="Takami H."/>
            <person name="Honda T."/>
            <person name="Sasakawa C."/>
            <person name="Ogasawara N."/>
            <person name="Yasunaga T."/>
            <person name="Kuhara S."/>
            <person name="Shiba T."/>
            <person name="Hattori M."/>
            <person name="Shinagawa H."/>
        </authorList>
    </citation>
    <scope>NUCLEOTIDE SEQUENCE [LARGE SCALE GENOMIC DNA]</scope>
    <source>
        <strain>O157:H7 / Sakai / RIMD 0509952 / EHEC</strain>
    </source>
</reference>